<sequence length="53" mass="6307">MKRTFQPHNRKRRNKHGFRQRMATKTGRKIISSRRAKGRHSLSVSSDMGSRRQ</sequence>
<accession>B3EQQ7</accession>
<reference key="1">
    <citation type="submission" date="2008-06" db="EMBL/GenBank/DDBJ databases">
        <title>Complete sequence of Chlorobium phaeobacteroides BS1.</title>
        <authorList>
            <consortium name="US DOE Joint Genome Institute"/>
            <person name="Lucas S."/>
            <person name="Copeland A."/>
            <person name="Lapidus A."/>
            <person name="Glavina del Rio T."/>
            <person name="Dalin E."/>
            <person name="Tice H."/>
            <person name="Bruce D."/>
            <person name="Goodwin L."/>
            <person name="Pitluck S."/>
            <person name="Schmutz J."/>
            <person name="Larimer F."/>
            <person name="Land M."/>
            <person name="Hauser L."/>
            <person name="Kyrpides N."/>
            <person name="Ovchinnikova G."/>
            <person name="Li T."/>
            <person name="Liu Z."/>
            <person name="Zhao F."/>
            <person name="Overmann J."/>
            <person name="Bryant D.A."/>
            <person name="Richardson P."/>
        </authorList>
    </citation>
    <scope>NUCLEOTIDE SEQUENCE [LARGE SCALE GENOMIC DNA]</scope>
    <source>
        <strain>BS1</strain>
    </source>
</reference>
<name>RL34_CHLPB</name>
<dbReference type="EMBL" id="CP001101">
    <property type="protein sequence ID" value="ACE05458.1"/>
    <property type="molecule type" value="Genomic_DNA"/>
</dbReference>
<dbReference type="SMR" id="B3EQQ7"/>
<dbReference type="STRING" id="331678.Cphamn1_2564"/>
<dbReference type="KEGG" id="cpb:Cphamn1_2564"/>
<dbReference type="eggNOG" id="COG0230">
    <property type="taxonomic scope" value="Bacteria"/>
</dbReference>
<dbReference type="HOGENOM" id="CLU_129938_2_0_10"/>
<dbReference type="OrthoDB" id="9804164at2"/>
<dbReference type="GO" id="GO:1990904">
    <property type="term" value="C:ribonucleoprotein complex"/>
    <property type="evidence" value="ECO:0007669"/>
    <property type="project" value="UniProtKB-KW"/>
</dbReference>
<dbReference type="GO" id="GO:0005840">
    <property type="term" value="C:ribosome"/>
    <property type="evidence" value="ECO:0007669"/>
    <property type="project" value="UniProtKB-KW"/>
</dbReference>
<dbReference type="GO" id="GO:0003735">
    <property type="term" value="F:structural constituent of ribosome"/>
    <property type="evidence" value="ECO:0007669"/>
    <property type="project" value="InterPro"/>
</dbReference>
<dbReference type="GO" id="GO:0006412">
    <property type="term" value="P:translation"/>
    <property type="evidence" value="ECO:0007669"/>
    <property type="project" value="UniProtKB-UniRule"/>
</dbReference>
<dbReference type="FunFam" id="1.10.287.3980:FF:000001">
    <property type="entry name" value="Mitochondrial ribosomal protein L34"/>
    <property type="match status" value="1"/>
</dbReference>
<dbReference type="Gene3D" id="1.10.287.3980">
    <property type="match status" value="1"/>
</dbReference>
<dbReference type="HAMAP" id="MF_00391">
    <property type="entry name" value="Ribosomal_bL34"/>
    <property type="match status" value="1"/>
</dbReference>
<dbReference type="InterPro" id="IPR000271">
    <property type="entry name" value="Ribosomal_bL34"/>
</dbReference>
<dbReference type="InterPro" id="IPR020939">
    <property type="entry name" value="Ribosomal_bL34_CS"/>
</dbReference>
<dbReference type="NCBIfam" id="TIGR01030">
    <property type="entry name" value="rpmH_bact"/>
    <property type="match status" value="1"/>
</dbReference>
<dbReference type="PANTHER" id="PTHR14503:SF4">
    <property type="entry name" value="LARGE RIBOSOMAL SUBUNIT PROTEIN BL34M"/>
    <property type="match status" value="1"/>
</dbReference>
<dbReference type="PANTHER" id="PTHR14503">
    <property type="entry name" value="MITOCHONDRIAL RIBOSOMAL PROTEIN 34 FAMILY MEMBER"/>
    <property type="match status" value="1"/>
</dbReference>
<dbReference type="Pfam" id="PF00468">
    <property type="entry name" value="Ribosomal_L34"/>
    <property type="match status" value="1"/>
</dbReference>
<dbReference type="PROSITE" id="PS00784">
    <property type="entry name" value="RIBOSOMAL_L34"/>
    <property type="match status" value="1"/>
</dbReference>
<protein>
    <recommendedName>
        <fullName evidence="1">Large ribosomal subunit protein bL34</fullName>
    </recommendedName>
    <alternativeName>
        <fullName evidence="3">50S ribosomal protein L34</fullName>
    </alternativeName>
</protein>
<comment type="similarity">
    <text evidence="1">Belongs to the bacterial ribosomal protein bL34 family.</text>
</comment>
<keyword id="KW-0687">Ribonucleoprotein</keyword>
<keyword id="KW-0689">Ribosomal protein</keyword>
<proteinExistence type="inferred from homology"/>
<feature type="chain" id="PRO_1000196022" description="Large ribosomal subunit protein bL34">
    <location>
        <begin position="1"/>
        <end position="53"/>
    </location>
</feature>
<feature type="region of interest" description="Disordered" evidence="2">
    <location>
        <begin position="1"/>
        <end position="53"/>
    </location>
</feature>
<feature type="compositionally biased region" description="Basic residues" evidence="2">
    <location>
        <begin position="1"/>
        <end position="19"/>
    </location>
</feature>
<feature type="compositionally biased region" description="Basic residues" evidence="2">
    <location>
        <begin position="26"/>
        <end position="40"/>
    </location>
</feature>
<feature type="compositionally biased region" description="Polar residues" evidence="2">
    <location>
        <begin position="42"/>
        <end position="53"/>
    </location>
</feature>
<organism>
    <name type="scientific">Chlorobium phaeobacteroides (strain BS1)</name>
    <dbReference type="NCBI Taxonomy" id="331678"/>
    <lineage>
        <taxon>Bacteria</taxon>
        <taxon>Pseudomonadati</taxon>
        <taxon>Chlorobiota</taxon>
        <taxon>Chlorobiia</taxon>
        <taxon>Chlorobiales</taxon>
        <taxon>Chlorobiaceae</taxon>
        <taxon>Chlorobium/Pelodictyon group</taxon>
        <taxon>Chlorobium</taxon>
    </lineage>
</organism>
<evidence type="ECO:0000255" key="1">
    <source>
        <dbReference type="HAMAP-Rule" id="MF_00391"/>
    </source>
</evidence>
<evidence type="ECO:0000256" key="2">
    <source>
        <dbReference type="SAM" id="MobiDB-lite"/>
    </source>
</evidence>
<evidence type="ECO:0000305" key="3"/>
<gene>
    <name evidence="1" type="primary">rpmH</name>
    <name type="ordered locus">Cphamn1_2564</name>
</gene>